<comment type="function">
    <text evidence="2">Catalyzes the NAD(+)-dependent oxidation of L-threonine to 2-amino-3-ketobutyrate. To a lesser extent, also catalyzes the oxidation of L-serine.</text>
</comment>
<comment type="catalytic activity">
    <reaction evidence="1 2">
        <text>L-threonine + NAD(+) = (2S)-2-amino-3-oxobutanoate + NADH + H(+)</text>
        <dbReference type="Rhea" id="RHEA:13161"/>
        <dbReference type="ChEBI" id="CHEBI:15378"/>
        <dbReference type="ChEBI" id="CHEBI:57540"/>
        <dbReference type="ChEBI" id="CHEBI:57926"/>
        <dbReference type="ChEBI" id="CHEBI:57945"/>
        <dbReference type="ChEBI" id="CHEBI:78948"/>
        <dbReference type="EC" id="1.1.1.103"/>
    </reaction>
</comment>
<comment type="cofactor">
    <cofactor evidence="1 2">
        <name>Zn(2+)</name>
        <dbReference type="ChEBI" id="CHEBI:29105"/>
    </cofactor>
    <text evidence="1 2">Binds 2 Zn(2+) ions per subunit (By similarity). Zn(2+) can be replaced by Cu(2+), Co(2+), Ca(2+) or Mn(2+) to some extent (PubMed:19307254).</text>
</comment>
<comment type="biophysicochemical properties">
    <kinetics>
        <KM evidence="2">1.6 mM for L-threonine (at 50 degrees Celsius)</KM>
        <KM evidence="2">0.028 mM for NAD(+) (at 50 degrees Celsius)</KM>
    </kinetics>
    <phDependence>
        <text evidence="2">Optimum pH is 12. Is active over a wide pH range from 6.5 to 12.5.</text>
    </phDependence>
    <temperatureDependence>
        <text evidence="2">Optimum temperature is 90 degrees Celsius. Extremely thermostable. The half-life of the enzyme is more than 2 hours at 85 degrees Celsius and 24 minutes in boiling water.</text>
    </temperatureDependence>
</comment>
<comment type="pathway">
    <text evidence="1 6 7">Amino-acid degradation; L-threonine degradation via oxydo-reductase pathway; glycine from L-threonine: step 1/2.</text>
</comment>
<comment type="subunit">
    <text evidence="2 3">Homotetramer.</text>
</comment>
<comment type="subcellular location">
    <subcellularLocation>
        <location evidence="1">Cytoplasm</location>
    </subcellularLocation>
</comment>
<comment type="miscellaneous">
    <text evidence="7">Docking studies suggest a mode of interaction of TDH with 2-amino-3-ketobutyrate CoA ligase (KBL), the subsequent enzyme in the pathway for conversion of threonine to glycine. TDH is known to form a stable functional complex with KBL, most probably to shield the unstable intermediate and permit its channelling between the active sites of both enzymes.</text>
</comment>
<comment type="similarity">
    <text evidence="1">Belongs to the zinc-containing alcohol dehydrogenase family.</text>
</comment>
<reference key="1">
    <citation type="journal article" date="2005" name="Genome Res.">
        <title>Complete genome sequence of the hyperthermophilic archaeon Thermococcus kodakaraensis KOD1 and comparison with Pyrococcus genomes.</title>
        <authorList>
            <person name="Fukui T."/>
            <person name="Atomi H."/>
            <person name="Kanai T."/>
            <person name="Matsumi R."/>
            <person name="Fujiwara S."/>
            <person name="Imanaka T."/>
        </authorList>
    </citation>
    <scope>NUCLEOTIDE SEQUENCE [LARGE SCALE GENOMIC DNA]</scope>
    <source>
        <strain>ATCC BAA-918 / JCM 12380 / KOD1</strain>
    </source>
</reference>
<reference key="2">
    <citation type="journal article" date="2009" name="J. Biochem.">
        <title>Highly thermostable L-threonine dehydrogenase from the hyperthermophilic archaeon Thermococcus kodakaraensis.</title>
        <authorList>
            <person name="Bashir Q."/>
            <person name="Rashid N."/>
            <person name="Jamil F."/>
            <person name="Imanaka T."/>
            <person name="Akhtar M."/>
        </authorList>
    </citation>
    <scope>FUNCTION</scope>
    <scope>CATALYTIC ACTIVITY</scope>
    <scope>SUBSTRATE SPECIFICITY</scope>
    <scope>COFACTOR</scope>
    <scope>BIOPHYSICOCHEMICAL PROPERTIES</scope>
    <scope>SUBUNIT</scope>
    <source>
        <strain>ATCC BAA-918 / JCM 12380 / KOD1</strain>
    </source>
</reference>
<reference key="3">
    <citation type="journal article" date="2009" name="J. Struct. Biol.">
        <title>Structure and function of the L-threonine dehydrogenase (TkTDH) from the hyperthermophilic archaeon Thermococcus kodakaraensis.</title>
        <authorList>
            <person name="Bowyer A."/>
            <person name="Mikolajek H."/>
            <person name="Stuart J.W."/>
            <person name="Wood S.P."/>
            <person name="Jamil F."/>
            <person name="Rashid N."/>
            <person name="Akhtar M."/>
            <person name="Cooper J.B."/>
        </authorList>
    </citation>
    <scope>X-RAY CRYSTALLOGRAPHY (2.40 ANGSTROMS) IN COMPLEX WITH NAD</scope>
    <scope>SUBUNIT</scope>
</reference>
<feature type="chain" id="PRO_0000160878" description="L-threonine 3-dehydrogenase">
    <location>
        <begin position="1"/>
        <end position="350"/>
    </location>
</feature>
<feature type="active site" description="Charge relay system" evidence="1">
    <location>
        <position position="44"/>
    </location>
</feature>
<feature type="active site" description="Charge relay system" evidence="1">
    <location>
        <position position="47"/>
    </location>
</feature>
<feature type="binding site" evidence="1">
    <location>
        <position position="42"/>
    </location>
    <ligand>
        <name>Zn(2+)</name>
        <dbReference type="ChEBI" id="CHEBI:29105"/>
        <label>1</label>
        <note>catalytic</note>
    </ligand>
</feature>
<feature type="binding site" evidence="1">
    <location>
        <position position="67"/>
    </location>
    <ligand>
        <name>Zn(2+)</name>
        <dbReference type="ChEBI" id="CHEBI:29105"/>
        <label>1</label>
        <note>catalytic</note>
    </ligand>
</feature>
<feature type="binding site" evidence="1">
    <location>
        <position position="68"/>
    </location>
    <ligand>
        <name>Zn(2+)</name>
        <dbReference type="ChEBI" id="CHEBI:29105"/>
        <label>1</label>
        <note>catalytic</note>
    </ligand>
</feature>
<feature type="binding site" evidence="1">
    <location>
        <position position="97"/>
    </location>
    <ligand>
        <name>Zn(2+)</name>
        <dbReference type="ChEBI" id="CHEBI:29105"/>
        <label>2</label>
    </ligand>
</feature>
<feature type="binding site" evidence="1">
    <location>
        <position position="100"/>
    </location>
    <ligand>
        <name>Zn(2+)</name>
        <dbReference type="ChEBI" id="CHEBI:29105"/>
        <label>2</label>
    </ligand>
</feature>
<feature type="binding site" evidence="1">
    <location>
        <position position="103"/>
    </location>
    <ligand>
        <name>Zn(2+)</name>
        <dbReference type="ChEBI" id="CHEBI:29105"/>
        <label>2</label>
    </ligand>
</feature>
<feature type="binding site" evidence="1">
    <location>
        <position position="111"/>
    </location>
    <ligand>
        <name>Zn(2+)</name>
        <dbReference type="ChEBI" id="CHEBI:29105"/>
        <label>2</label>
    </ligand>
</feature>
<feature type="binding site" evidence="3">
    <location>
        <position position="179"/>
    </location>
    <ligand>
        <name>NAD(+)</name>
        <dbReference type="ChEBI" id="CHEBI:57540"/>
    </ligand>
</feature>
<feature type="binding site" evidence="3">
    <location>
        <position position="199"/>
    </location>
    <ligand>
        <name>NAD(+)</name>
        <dbReference type="ChEBI" id="CHEBI:57540"/>
    </ligand>
</feature>
<feature type="binding site" evidence="3 8">
    <location>
        <position position="204"/>
    </location>
    <ligand>
        <name>NAD(+)</name>
        <dbReference type="ChEBI" id="CHEBI:57540"/>
    </ligand>
</feature>
<feature type="binding site" evidence="3 8">
    <location>
        <begin position="266"/>
        <end position="268"/>
    </location>
    <ligand>
        <name>NAD(+)</name>
        <dbReference type="ChEBI" id="CHEBI:57540"/>
    </ligand>
</feature>
<feature type="binding site" evidence="3 8">
    <location>
        <begin position="291"/>
        <end position="292"/>
    </location>
    <ligand>
        <name>NAD(+)</name>
        <dbReference type="ChEBI" id="CHEBI:57540"/>
    </ligand>
</feature>
<feature type="site" description="Important for catalytic activity for the proton relay mechanism but does not participate directly in the coordination of zinc atom" evidence="1">
    <location>
        <position position="152"/>
    </location>
</feature>
<feature type="strand" evidence="9">
    <location>
        <begin position="4"/>
        <end position="10"/>
    </location>
</feature>
<feature type="strand" evidence="9">
    <location>
        <begin position="12"/>
        <end position="16"/>
    </location>
</feature>
<feature type="strand" evidence="9">
    <location>
        <begin position="18"/>
        <end position="23"/>
    </location>
</feature>
<feature type="strand" evidence="9">
    <location>
        <begin position="31"/>
        <end position="41"/>
    </location>
</feature>
<feature type="helix" evidence="9">
    <location>
        <begin position="43"/>
        <end position="50"/>
    </location>
</feature>
<feature type="helix" evidence="9">
    <location>
        <begin position="53"/>
        <end position="58"/>
    </location>
</feature>
<feature type="strand" evidence="9">
    <location>
        <begin position="61"/>
        <end position="64"/>
    </location>
</feature>
<feature type="strand" evidence="9">
    <location>
        <begin position="68"/>
        <end position="76"/>
    </location>
</feature>
<feature type="strand" evidence="9">
    <location>
        <begin position="88"/>
        <end position="91"/>
    </location>
</feature>
<feature type="strand" evidence="9">
    <location>
        <begin position="98"/>
        <end position="100"/>
    </location>
</feature>
<feature type="helix" evidence="9">
    <location>
        <begin position="101"/>
        <end position="104"/>
    </location>
</feature>
<feature type="strand" evidence="9">
    <location>
        <begin position="114"/>
        <end position="116"/>
    </location>
</feature>
<feature type="turn" evidence="9">
    <location>
        <begin position="117"/>
        <end position="119"/>
    </location>
</feature>
<feature type="strand" evidence="9">
    <location>
        <begin position="126"/>
        <end position="132"/>
    </location>
</feature>
<feature type="helix" evidence="9">
    <location>
        <begin position="133"/>
        <end position="135"/>
    </location>
</feature>
<feature type="strand" evidence="9">
    <location>
        <begin position="136"/>
        <end position="138"/>
    </location>
</feature>
<feature type="helix" evidence="9">
    <location>
        <begin position="145"/>
        <end position="149"/>
    </location>
</feature>
<feature type="helix" evidence="9">
    <location>
        <begin position="151"/>
        <end position="161"/>
    </location>
</feature>
<feature type="strand" evidence="9">
    <location>
        <begin position="171"/>
        <end position="174"/>
    </location>
</feature>
<feature type="helix" evidence="9">
    <location>
        <begin position="178"/>
        <end position="189"/>
    </location>
</feature>
<feature type="strand" evidence="9">
    <location>
        <begin position="193"/>
        <end position="198"/>
    </location>
</feature>
<feature type="helix" evidence="9">
    <location>
        <begin position="202"/>
        <end position="211"/>
    </location>
</feature>
<feature type="strand" evidence="9">
    <location>
        <begin position="214"/>
        <end position="217"/>
    </location>
</feature>
<feature type="helix" evidence="9">
    <location>
        <begin position="219"/>
        <end position="221"/>
    </location>
</feature>
<feature type="helix" evidence="9">
    <location>
        <begin position="224"/>
        <end position="231"/>
    </location>
</feature>
<feature type="turn" evidence="9">
    <location>
        <begin position="232"/>
        <end position="234"/>
    </location>
</feature>
<feature type="strand" evidence="9">
    <location>
        <begin position="237"/>
        <end position="242"/>
    </location>
</feature>
<feature type="helix" evidence="9">
    <location>
        <begin position="247"/>
        <end position="256"/>
    </location>
</feature>
<feature type="strand" evidence="9">
    <location>
        <begin position="257"/>
        <end position="265"/>
    </location>
</feature>
<feature type="strand" evidence="9">
    <location>
        <begin position="273"/>
        <end position="275"/>
    </location>
</feature>
<feature type="helix" evidence="9">
    <location>
        <begin position="277"/>
        <end position="280"/>
    </location>
</feature>
<feature type="turn" evidence="9">
    <location>
        <begin position="281"/>
        <end position="285"/>
    </location>
</feature>
<feature type="strand" evidence="9">
    <location>
        <begin position="287"/>
        <end position="290"/>
    </location>
</feature>
<feature type="helix" evidence="9">
    <location>
        <begin position="298"/>
        <end position="308"/>
    </location>
</feature>
<feature type="turn" evidence="9">
    <location>
        <begin position="315"/>
        <end position="317"/>
    </location>
</feature>
<feature type="strand" evidence="9">
    <location>
        <begin position="318"/>
        <end position="323"/>
    </location>
</feature>
<feature type="turn" evidence="9">
    <location>
        <begin position="324"/>
        <end position="327"/>
    </location>
</feature>
<feature type="helix" evidence="9">
    <location>
        <begin position="328"/>
        <end position="336"/>
    </location>
</feature>
<feature type="strand" evidence="9">
    <location>
        <begin position="341"/>
        <end position="347"/>
    </location>
</feature>
<evidence type="ECO:0000255" key="1">
    <source>
        <dbReference type="HAMAP-Rule" id="MF_00627"/>
    </source>
</evidence>
<evidence type="ECO:0000269" key="2">
    <source>
    </source>
</evidence>
<evidence type="ECO:0000269" key="3">
    <source>
    </source>
</evidence>
<evidence type="ECO:0000303" key="4">
    <source>
    </source>
</evidence>
<evidence type="ECO:0000303" key="5">
    <source>
    </source>
</evidence>
<evidence type="ECO:0000305" key="6">
    <source>
    </source>
</evidence>
<evidence type="ECO:0000305" key="7">
    <source>
    </source>
</evidence>
<evidence type="ECO:0007744" key="8">
    <source>
        <dbReference type="PDB" id="3GFB"/>
    </source>
</evidence>
<evidence type="ECO:0007829" key="9">
    <source>
        <dbReference type="PDB" id="3GFB"/>
    </source>
</evidence>
<proteinExistence type="evidence at protein level"/>
<dbReference type="EC" id="1.1.1.103" evidence="1 2"/>
<dbReference type="EMBL" id="AP006878">
    <property type="protein sequence ID" value="BAD85105.1"/>
    <property type="molecule type" value="Genomic_DNA"/>
</dbReference>
<dbReference type="RefSeq" id="WP_011249867.1">
    <property type="nucleotide sequence ID" value="NC_006624.1"/>
</dbReference>
<dbReference type="PDB" id="3GFB">
    <property type="method" value="X-ray"/>
    <property type="resolution" value="2.40 A"/>
    <property type="chains" value="A/B/C/D=1-350"/>
</dbReference>
<dbReference type="PDBsum" id="3GFB"/>
<dbReference type="SMR" id="Q5JI69"/>
<dbReference type="STRING" id="69014.TK0916"/>
<dbReference type="EnsemblBacteria" id="BAD85105">
    <property type="protein sequence ID" value="BAD85105"/>
    <property type="gene ID" value="TK0916"/>
</dbReference>
<dbReference type="GeneID" id="78447431"/>
<dbReference type="KEGG" id="tko:TK0916"/>
<dbReference type="PATRIC" id="fig|69014.16.peg.896"/>
<dbReference type="eggNOG" id="arCOG01459">
    <property type="taxonomic scope" value="Archaea"/>
</dbReference>
<dbReference type="HOGENOM" id="CLU_026673_11_0_2"/>
<dbReference type="InParanoid" id="Q5JI69"/>
<dbReference type="OrthoDB" id="73567at2157"/>
<dbReference type="PhylomeDB" id="Q5JI69"/>
<dbReference type="BRENDA" id="1.1.1.103">
    <property type="organism ID" value="5246"/>
</dbReference>
<dbReference type="UniPathway" id="UPA00046">
    <property type="reaction ID" value="UER00505"/>
</dbReference>
<dbReference type="EvolutionaryTrace" id="Q5JI69"/>
<dbReference type="Proteomes" id="UP000000536">
    <property type="component" value="Chromosome"/>
</dbReference>
<dbReference type="GO" id="GO:0005737">
    <property type="term" value="C:cytoplasm"/>
    <property type="evidence" value="ECO:0007669"/>
    <property type="project" value="UniProtKB-SubCell"/>
</dbReference>
<dbReference type="GO" id="GO:0016597">
    <property type="term" value="F:amino acid binding"/>
    <property type="evidence" value="ECO:0000314"/>
    <property type="project" value="UniProtKB"/>
</dbReference>
<dbReference type="GO" id="GO:0008743">
    <property type="term" value="F:L-threonine 3-dehydrogenase activity"/>
    <property type="evidence" value="ECO:0000314"/>
    <property type="project" value="UniProtKB"/>
</dbReference>
<dbReference type="GO" id="GO:0070403">
    <property type="term" value="F:NAD+ binding"/>
    <property type="evidence" value="ECO:0000314"/>
    <property type="project" value="UniProtKB"/>
</dbReference>
<dbReference type="GO" id="GO:0008270">
    <property type="term" value="F:zinc ion binding"/>
    <property type="evidence" value="ECO:0000314"/>
    <property type="project" value="UniProtKB"/>
</dbReference>
<dbReference type="GO" id="GO:0019518">
    <property type="term" value="P:L-threonine catabolic process to glycine"/>
    <property type="evidence" value="ECO:0007669"/>
    <property type="project" value="UniProtKB-UniPathway"/>
</dbReference>
<dbReference type="GO" id="GO:0051289">
    <property type="term" value="P:protein homotetramerization"/>
    <property type="evidence" value="ECO:0000314"/>
    <property type="project" value="UniProtKB"/>
</dbReference>
<dbReference type="GO" id="GO:0006566">
    <property type="term" value="P:threonine metabolic process"/>
    <property type="evidence" value="ECO:0000314"/>
    <property type="project" value="UniProtKB"/>
</dbReference>
<dbReference type="CDD" id="cd05281">
    <property type="entry name" value="TDH"/>
    <property type="match status" value="1"/>
</dbReference>
<dbReference type="FunFam" id="3.40.50.720:FF:000068">
    <property type="entry name" value="Sorbitol dehydrogenase"/>
    <property type="match status" value="1"/>
</dbReference>
<dbReference type="Gene3D" id="3.90.180.10">
    <property type="entry name" value="Medium-chain alcohol dehydrogenases, catalytic domain"/>
    <property type="match status" value="1"/>
</dbReference>
<dbReference type="Gene3D" id="3.40.50.720">
    <property type="entry name" value="NAD(P)-binding Rossmann-like Domain"/>
    <property type="match status" value="1"/>
</dbReference>
<dbReference type="HAMAP" id="MF_00627">
    <property type="entry name" value="Thr_dehydrog"/>
    <property type="match status" value="1"/>
</dbReference>
<dbReference type="InterPro" id="IPR013149">
    <property type="entry name" value="ADH-like_C"/>
</dbReference>
<dbReference type="InterPro" id="IPR013154">
    <property type="entry name" value="ADH-like_N"/>
</dbReference>
<dbReference type="InterPro" id="IPR002328">
    <property type="entry name" value="ADH_Zn_CS"/>
</dbReference>
<dbReference type="InterPro" id="IPR011032">
    <property type="entry name" value="GroES-like_sf"/>
</dbReference>
<dbReference type="InterPro" id="IPR004627">
    <property type="entry name" value="L-Threonine_3-DHase"/>
</dbReference>
<dbReference type="InterPro" id="IPR036291">
    <property type="entry name" value="NAD(P)-bd_dom_sf"/>
</dbReference>
<dbReference type="InterPro" id="IPR020843">
    <property type="entry name" value="PKS_ER"/>
</dbReference>
<dbReference type="InterPro" id="IPR050129">
    <property type="entry name" value="Zn_alcohol_dh"/>
</dbReference>
<dbReference type="NCBIfam" id="NF003808">
    <property type="entry name" value="PRK05396.1"/>
    <property type="match status" value="1"/>
</dbReference>
<dbReference type="NCBIfam" id="TIGR00692">
    <property type="entry name" value="tdh"/>
    <property type="match status" value="1"/>
</dbReference>
<dbReference type="PANTHER" id="PTHR43401">
    <property type="entry name" value="L-THREONINE 3-DEHYDROGENASE"/>
    <property type="match status" value="1"/>
</dbReference>
<dbReference type="PANTHER" id="PTHR43401:SF2">
    <property type="entry name" value="L-THREONINE 3-DEHYDROGENASE"/>
    <property type="match status" value="1"/>
</dbReference>
<dbReference type="Pfam" id="PF08240">
    <property type="entry name" value="ADH_N"/>
    <property type="match status" value="1"/>
</dbReference>
<dbReference type="Pfam" id="PF00107">
    <property type="entry name" value="ADH_zinc_N"/>
    <property type="match status" value="1"/>
</dbReference>
<dbReference type="SMART" id="SM00829">
    <property type="entry name" value="PKS_ER"/>
    <property type="match status" value="1"/>
</dbReference>
<dbReference type="SUPFAM" id="SSF50129">
    <property type="entry name" value="GroES-like"/>
    <property type="match status" value="1"/>
</dbReference>
<dbReference type="SUPFAM" id="SSF51735">
    <property type="entry name" value="NAD(P)-binding Rossmann-fold domains"/>
    <property type="match status" value="1"/>
</dbReference>
<dbReference type="PROSITE" id="PS00059">
    <property type="entry name" value="ADH_ZINC"/>
    <property type="match status" value="1"/>
</dbReference>
<sequence length="350" mass="38101">MAEKMQAIMKTKPAYGAELVEVDVPKPGPGEVLIKVLATSICGTDLHIYEWNEWAQSRIKPPQIMGHEVAGEVVEVGPGVEDLQVGDYISVETHIVCGKCYACKHNRYHVCQNTKIFGVDMDGVFAHYAIVPAKNAWKNPKDMPPEYAALQEPLGNAVDTVLAGPIAGRSTLITGAGPLGLLGIAVAKASGAYPVIVSEPSEFRRKLAKKVGADYVVNPFEEDPVKFVMDITDGAGVEVFLEFSGAPKALEQGLKAVTPGGRVSLLGLFPREVTIDFNNLIIFKALEVHGITGRHLWETWYTVSSLIQSGKLNLDPIITHKYKGFDKFEEAFELMRAGKTGKVVFFPHKG</sequence>
<name>TDH_THEKO</name>
<gene>
    <name evidence="1" type="primary">tdh</name>
    <name type="ordered locus">TK0916</name>
</gene>
<protein>
    <recommendedName>
        <fullName evidence="1">L-threonine 3-dehydrogenase</fullName>
        <shortName evidence="1 5">TDH</shortName>
        <ecNumber evidence="1 2">1.1.1.103</ecNumber>
    </recommendedName>
    <alternativeName>
        <fullName evidence="4 5">L-threonine dehydrogenase</fullName>
    </alternativeName>
</protein>
<keyword id="KW-0002">3D-structure</keyword>
<keyword id="KW-0963">Cytoplasm</keyword>
<keyword id="KW-0479">Metal-binding</keyword>
<keyword id="KW-0520">NAD</keyword>
<keyword id="KW-0560">Oxidoreductase</keyword>
<keyword id="KW-1185">Reference proteome</keyword>
<keyword id="KW-0862">Zinc</keyword>
<accession>Q5JI69</accession>
<organism>
    <name type="scientific">Thermococcus kodakarensis (strain ATCC BAA-918 / JCM 12380 / KOD1)</name>
    <name type="common">Pyrococcus kodakaraensis (strain KOD1)</name>
    <dbReference type="NCBI Taxonomy" id="69014"/>
    <lineage>
        <taxon>Archaea</taxon>
        <taxon>Methanobacteriati</taxon>
        <taxon>Methanobacteriota</taxon>
        <taxon>Thermococci</taxon>
        <taxon>Thermococcales</taxon>
        <taxon>Thermococcaceae</taxon>
        <taxon>Thermococcus</taxon>
    </lineage>
</organism>